<protein>
    <recommendedName>
        <fullName evidence="1">Methionine-rich nacre protein</fullName>
        <shortName evidence="1">MRNP</shortName>
    </recommendedName>
    <alternativeName>
        <fullName evidence="5">Methionine-rich nacre protein 34</fullName>
        <shortName evidence="5">Pmarg-MRNP34</shortName>
    </alternativeName>
</protein>
<sequence length="260" mass="28455">MRRILCLAVVIFIINDVSSQGLGSNKNWKKSGMSLSSPGNKKPTGNNNAVPQKSKMNNVNQNSLSQPKRPSHPGNSMYFMGNQGPMGMMGGFGMGMNNKQMREFMIAKRTHGVSPFLKKKICHMAKVAPPVNGIMPSPPQLYAQGFKIRRIGKWFSHDLDWSEGVAMCHNKEMEHRGCEKTPSAKWGRMFPGMGGMGGMGGMGGMMMGSRPMASCDVTKPNSCGNPALMKCSKYHKDRFGMPVCCATSEMTANQLENMGF</sequence>
<organism>
    <name type="scientific">Margaritifera margaritifera</name>
    <name type="common">Freshwater pearl mussel</name>
    <dbReference type="NCBI Taxonomy" id="102329"/>
    <lineage>
        <taxon>Eukaryota</taxon>
        <taxon>Metazoa</taxon>
        <taxon>Spiralia</taxon>
        <taxon>Lophotrochozoa</taxon>
        <taxon>Mollusca</taxon>
        <taxon>Bivalvia</taxon>
        <taxon>Autobranchia</taxon>
        <taxon>Pteriomorphia</taxon>
        <taxon>Pterioida</taxon>
        <taxon>Pterioidea</taxon>
        <taxon>Pteriidae</taxon>
        <taxon>Pinctada</taxon>
    </lineage>
</organism>
<dbReference type="EMBL" id="HQ625028">
    <property type="protein sequence ID" value="ADU05417.1"/>
    <property type="molecule type" value="mRNA"/>
</dbReference>
<dbReference type="GO" id="GO:0005576">
    <property type="term" value="C:extracellular region"/>
    <property type="evidence" value="ECO:0007669"/>
    <property type="project" value="UniProtKB-SubCell"/>
</dbReference>
<accession>P86872</accession>
<accession>E7EAP8</accession>
<proteinExistence type="evidence at protein level"/>
<reference evidence="6" key="1">
    <citation type="journal article" date="2010" name="BMC Genomics">
        <title>Transcriptome and proteome analysis of Pinctada margaritifera calcifying mantle and shell: focus on biomineralization.</title>
        <authorList>
            <person name="Joubert C."/>
            <person name="Piquemal D."/>
            <person name="Marie B."/>
            <person name="Manchon L."/>
            <person name="Pierrat F."/>
            <person name="Zanella-Cleon I."/>
            <person name="Cochennec-Laureau N."/>
            <person name="Gueguen Y."/>
            <person name="Montagnani C."/>
        </authorList>
    </citation>
    <scope>NUCLEOTIDE SEQUENCE [MRNA]</scope>
    <source>
        <tissue evidence="3">Mantle</tissue>
    </source>
</reference>
<reference evidence="6" key="2">
    <citation type="journal article" date="2012" name="Amino Acids">
        <title>Characterization of MRNP34, a novel methionine-rich nacre protein from the pearl oysters.</title>
        <authorList>
            <person name="Marie B."/>
            <person name="Joubert C."/>
            <person name="Belliard C."/>
            <person name="Tayale A."/>
            <person name="Zanella-Cleon I."/>
            <person name="Marin F."/>
            <person name="Gueguen Y."/>
            <person name="Montagnani C."/>
        </authorList>
    </citation>
    <scope>PROTEIN SEQUENCE OF 20-68 AND 103-147</scope>
    <scope>SUBCELLULAR LOCATION</scope>
    <scope>TISSUE SPECIFICITY</scope>
    <source>
        <tissue evidence="4">Mantle</tissue>
        <tissue evidence="4">Nacre</tissue>
    </source>
</reference>
<name>MRNP_PINMG</name>
<evidence type="ECO:0000250" key="1">
    <source>
        <dbReference type="UniProtKB" id="P86871"/>
    </source>
</evidence>
<evidence type="ECO:0000256" key="2">
    <source>
        <dbReference type="SAM" id="MobiDB-lite"/>
    </source>
</evidence>
<evidence type="ECO:0000269" key="3">
    <source>
    </source>
</evidence>
<evidence type="ECO:0000269" key="4">
    <source>
    </source>
</evidence>
<evidence type="ECO:0000303" key="5">
    <source>
    </source>
</evidence>
<evidence type="ECO:0000305" key="6"/>
<feature type="signal peptide" evidence="4">
    <location>
        <begin position="1"/>
        <end position="19"/>
    </location>
</feature>
<feature type="chain" id="PRO_0000404094" description="Methionine-rich nacre protein" evidence="4">
    <location>
        <begin position="20"/>
        <end position="260"/>
    </location>
</feature>
<feature type="region of interest" description="Disordered" evidence="2">
    <location>
        <begin position="23"/>
        <end position="75"/>
    </location>
</feature>
<feature type="compositionally biased region" description="Polar residues" evidence="2">
    <location>
        <begin position="33"/>
        <end position="68"/>
    </location>
</feature>
<comment type="subcellular location">
    <subcellularLocation>
        <location evidence="4">Secreted</location>
    </subcellularLocation>
</comment>
<comment type="tissue specificity">
    <text evidence="4">Expressed in mantle distal zone, mantle margin and grafted pearl pockets. Not expressed in adductor muscle, gills, hemocytes or ungrafted pearl pockets. Within the mantle, specifically expressed in mineralizing outer epithelium cells (at protein level). After secretion incorporated into acid-insoluble nacre matrix of shell and pearl (at protein level). Not found in acid-insoluble matrix of shell prisms (at protein level).</text>
</comment>
<keyword id="KW-0903">Direct protein sequencing</keyword>
<keyword id="KW-0964">Secreted</keyword>
<keyword id="KW-0732">Signal</keyword>